<gene>
    <name type="ordered locus">At1g23250</name>
    <name type="ORF">F26F24.9</name>
</gene>
<protein>
    <recommendedName>
        <fullName>Probable inactive peroxygenase-like protein</fullName>
    </recommendedName>
</protein>
<accession>F4I4P8</accession>
<proteinExistence type="inferred from homology"/>
<feature type="chain" id="PRO_0000415558" description="Probable inactive peroxygenase-like protein">
    <location>
        <begin position="1"/>
        <end position="205"/>
    </location>
</feature>
<feature type="short sequence motif" description="Proline-knot">
    <location>
        <begin position="79"/>
        <end position="88"/>
    </location>
</feature>
<feature type="modified residue" description="Phosphoserine" evidence="2">
    <location>
        <position position="183"/>
    </location>
</feature>
<keyword id="KW-0551">Lipid droplet</keyword>
<keyword id="KW-0597">Phosphoprotein</keyword>
<keyword id="KW-1185">Reference proteome</keyword>
<comment type="subcellular location">
    <subcellularLocation>
        <location evidence="1">Lipid droplet</location>
    </subcellularLocation>
</comment>
<comment type="domain">
    <text>Transmembrane regions are predicted by sequence analysis tools, but these regions probably constitute hydrophobic domains associated to phospholipids.</text>
</comment>
<comment type="domain">
    <text>The proline-knot motif (79-88) may be involved in targeting to lipid bodies.</text>
</comment>
<comment type="similarity">
    <text evidence="3">Belongs to the caleosin family.</text>
</comment>
<dbReference type="EMBL" id="AC005292">
    <property type="status" value="NOT_ANNOTATED_CDS"/>
    <property type="molecule type" value="Genomic_DNA"/>
</dbReference>
<dbReference type="EMBL" id="CP002684">
    <property type="protein sequence ID" value="AEE30364.1"/>
    <property type="molecule type" value="Genomic_DNA"/>
</dbReference>
<dbReference type="RefSeq" id="NP_173739.4">
    <property type="nucleotide sequence ID" value="NM_102174.5"/>
</dbReference>
<dbReference type="STRING" id="3702.F4I4P8"/>
<dbReference type="PaxDb" id="3702-AT1G23250.1"/>
<dbReference type="ProteomicsDB" id="224806"/>
<dbReference type="EnsemblPlants" id="AT1G23250.1">
    <property type="protein sequence ID" value="AT1G23250.1"/>
    <property type="gene ID" value="AT1G23250"/>
</dbReference>
<dbReference type="GeneID" id="838934"/>
<dbReference type="Gramene" id="AT1G23250.1">
    <property type="protein sequence ID" value="AT1G23250.1"/>
    <property type="gene ID" value="AT1G23250"/>
</dbReference>
<dbReference type="KEGG" id="ath:AT1G23250"/>
<dbReference type="Araport" id="AT1G23250"/>
<dbReference type="TAIR" id="AT1G23250"/>
<dbReference type="eggNOG" id="ENOG502QTJ2">
    <property type="taxonomic scope" value="Eukaryota"/>
</dbReference>
<dbReference type="HOGENOM" id="CLU_1339195_0_0_1"/>
<dbReference type="InParanoid" id="F4I4P8"/>
<dbReference type="PhylomeDB" id="F4I4P8"/>
<dbReference type="PRO" id="PR:F4I4P8"/>
<dbReference type="Proteomes" id="UP000006548">
    <property type="component" value="Chromosome 1"/>
</dbReference>
<dbReference type="ExpressionAtlas" id="F4I4P8">
    <property type="expression patterns" value="baseline and differential"/>
</dbReference>
<dbReference type="GO" id="GO:0005811">
    <property type="term" value="C:lipid droplet"/>
    <property type="evidence" value="ECO:0007669"/>
    <property type="project" value="UniProtKB-SubCell"/>
</dbReference>
<dbReference type="InterPro" id="IPR007736">
    <property type="entry name" value="Caleosin-related"/>
</dbReference>
<dbReference type="PANTHER" id="PTHR31495:SF1">
    <property type="entry name" value="INACTIVE PEROXYGENASE-LIKE PROTEIN-RELATED"/>
    <property type="match status" value="1"/>
</dbReference>
<dbReference type="PANTHER" id="PTHR31495">
    <property type="entry name" value="PEROXYGENASE 3-RELATED"/>
    <property type="match status" value="1"/>
</dbReference>
<dbReference type="Pfam" id="PF05042">
    <property type="entry name" value="Caleosin"/>
    <property type="match status" value="1"/>
</dbReference>
<sequence>MWNALKRLPLFPPSPKEDKQLRKERLHWRNMCPSLTETVTALFIHEKPTKGFRALGTGRFMSAFVAVFFNMGLSQKTRPVQLFGYILPLFLKPFVCTVVTTDVYDKDGRFVESKFEEIFNKHARTHKDALTAKEIKQMLKTNREPYDFIGWLSDFIEWKILHTLAQDNGLLTEDAVRGVYDGSLFQQLEKKRSSSSSRGKKQKLP</sequence>
<evidence type="ECO:0000250" key="1"/>
<evidence type="ECO:0000250" key="2">
    <source>
        <dbReference type="UniProtKB" id="O81270"/>
    </source>
</evidence>
<evidence type="ECO:0000305" key="3"/>
<name>PXGL_ARATH</name>
<organism>
    <name type="scientific">Arabidopsis thaliana</name>
    <name type="common">Mouse-ear cress</name>
    <dbReference type="NCBI Taxonomy" id="3702"/>
    <lineage>
        <taxon>Eukaryota</taxon>
        <taxon>Viridiplantae</taxon>
        <taxon>Streptophyta</taxon>
        <taxon>Embryophyta</taxon>
        <taxon>Tracheophyta</taxon>
        <taxon>Spermatophyta</taxon>
        <taxon>Magnoliopsida</taxon>
        <taxon>eudicotyledons</taxon>
        <taxon>Gunneridae</taxon>
        <taxon>Pentapetalae</taxon>
        <taxon>rosids</taxon>
        <taxon>malvids</taxon>
        <taxon>Brassicales</taxon>
        <taxon>Brassicaceae</taxon>
        <taxon>Camelineae</taxon>
        <taxon>Arabidopsis</taxon>
    </lineage>
</organism>
<reference key="1">
    <citation type="journal article" date="2000" name="Nature">
        <title>Sequence and analysis of chromosome 1 of the plant Arabidopsis thaliana.</title>
        <authorList>
            <person name="Theologis A."/>
            <person name="Ecker J.R."/>
            <person name="Palm C.J."/>
            <person name="Federspiel N.A."/>
            <person name="Kaul S."/>
            <person name="White O."/>
            <person name="Alonso J."/>
            <person name="Altafi H."/>
            <person name="Araujo R."/>
            <person name="Bowman C.L."/>
            <person name="Brooks S.Y."/>
            <person name="Buehler E."/>
            <person name="Chan A."/>
            <person name="Chao Q."/>
            <person name="Chen H."/>
            <person name="Cheuk R.F."/>
            <person name="Chin C.W."/>
            <person name="Chung M.K."/>
            <person name="Conn L."/>
            <person name="Conway A.B."/>
            <person name="Conway A.R."/>
            <person name="Creasy T.H."/>
            <person name="Dewar K."/>
            <person name="Dunn P."/>
            <person name="Etgu P."/>
            <person name="Feldblyum T.V."/>
            <person name="Feng J.-D."/>
            <person name="Fong B."/>
            <person name="Fujii C.Y."/>
            <person name="Gill J.E."/>
            <person name="Goldsmith A.D."/>
            <person name="Haas B."/>
            <person name="Hansen N.F."/>
            <person name="Hughes B."/>
            <person name="Huizar L."/>
            <person name="Hunter J.L."/>
            <person name="Jenkins J."/>
            <person name="Johnson-Hopson C."/>
            <person name="Khan S."/>
            <person name="Khaykin E."/>
            <person name="Kim C.J."/>
            <person name="Koo H.L."/>
            <person name="Kremenetskaia I."/>
            <person name="Kurtz D.B."/>
            <person name="Kwan A."/>
            <person name="Lam B."/>
            <person name="Langin-Hooper S."/>
            <person name="Lee A."/>
            <person name="Lee J.M."/>
            <person name="Lenz C.A."/>
            <person name="Li J.H."/>
            <person name="Li Y.-P."/>
            <person name="Lin X."/>
            <person name="Liu S.X."/>
            <person name="Liu Z.A."/>
            <person name="Luros J.S."/>
            <person name="Maiti R."/>
            <person name="Marziali A."/>
            <person name="Militscher J."/>
            <person name="Miranda M."/>
            <person name="Nguyen M."/>
            <person name="Nierman W.C."/>
            <person name="Osborne B.I."/>
            <person name="Pai G."/>
            <person name="Peterson J."/>
            <person name="Pham P.K."/>
            <person name="Rizzo M."/>
            <person name="Rooney T."/>
            <person name="Rowley D."/>
            <person name="Sakano H."/>
            <person name="Salzberg S.L."/>
            <person name="Schwartz J.R."/>
            <person name="Shinn P."/>
            <person name="Southwick A.M."/>
            <person name="Sun H."/>
            <person name="Tallon L.J."/>
            <person name="Tambunga G."/>
            <person name="Toriumi M.J."/>
            <person name="Town C.D."/>
            <person name="Utterback T."/>
            <person name="Van Aken S."/>
            <person name="Vaysberg M."/>
            <person name="Vysotskaia V.S."/>
            <person name="Walker M."/>
            <person name="Wu D."/>
            <person name="Yu G."/>
            <person name="Fraser C.M."/>
            <person name="Venter J.C."/>
            <person name="Davis R.W."/>
        </authorList>
    </citation>
    <scope>NUCLEOTIDE SEQUENCE [LARGE SCALE GENOMIC DNA]</scope>
    <source>
        <strain>cv. Columbia</strain>
    </source>
</reference>
<reference key="2">
    <citation type="journal article" date="2017" name="Plant J.">
        <title>Araport11: a complete reannotation of the Arabidopsis thaliana reference genome.</title>
        <authorList>
            <person name="Cheng C.Y."/>
            <person name="Krishnakumar V."/>
            <person name="Chan A.P."/>
            <person name="Thibaud-Nissen F."/>
            <person name="Schobel S."/>
            <person name="Town C.D."/>
        </authorList>
    </citation>
    <scope>GENOME REANNOTATION</scope>
    <source>
        <strain>cv. Columbia</strain>
    </source>
</reference>